<evidence type="ECO:0000255" key="1">
    <source>
        <dbReference type="HAMAP-Rule" id="MF_00069"/>
    </source>
</evidence>
<reference key="1">
    <citation type="journal article" date="2006" name="J. Bacteriol.">
        <title>Complete genome sequence of the dehalorespiring bacterium Desulfitobacterium hafniense Y51 and comparison with Dehalococcoides ethenogenes 195.</title>
        <authorList>
            <person name="Nonaka H."/>
            <person name="Keresztes G."/>
            <person name="Shinoda Y."/>
            <person name="Ikenaga Y."/>
            <person name="Abe M."/>
            <person name="Naito K."/>
            <person name="Inatomi K."/>
            <person name="Furukawa K."/>
            <person name="Inui M."/>
            <person name="Yukawa H."/>
        </authorList>
    </citation>
    <scope>NUCLEOTIDE SEQUENCE [LARGE SCALE GENOMIC DNA]</scope>
    <source>
        <strain>Y51</strain>
    </source>
</reference>
<accession>Q24S27</accession>
<protein>
    <recommendedName>
        <fullName evidence="1">Hydroxylamine reductase</fullName>
        <ecNumber evidence="1">1.7.99.1</ecNumber>
    </recommendedName>
    <alternativeName>
        <fullName evidence="1">Hybrid-cluster protein</fullName>
        <shortName evidence="1">HCP</shortName>
    </alternativeName>
    <alternativeName>
        <fullName evidence="1">Prismane protein</fullName>
    </alternativeName>
</protein>
<name>HCP_DESHY</name>
<feature type="chain" id="PRO_1000009152" description="Hydroxylamine reductase">
    <location>
        <begin position="1"/>
        <end position="549"/>
    </location>
</feature>
<feature type="binding site" evidence="1">
    <location>
        <position position="5"/>
    </location>
    <ligand>
        <name>[4Fe-4S] cluster</name>
        <dbReference type="ChEBI" id="CHEBI:49883"/>
    </ligand>
</feature>
<feature type="binding site" evidence="1">
    <location>
        <position position="8"/>
    </location>
    <ligand>
        <name>[4Fe-4S] cluster</name>
        <dbReference type="ChEBI" id="CHEBI:49883"/>
    </ligand>
</feature>
<feature type="binding site" evidence="1">
    <location>
        <position position="17"/>
    </location>
    <ligand>
        <name>[4Fe-4S] cluster</name>
        <dbReference type="ChEBI" id="CHEBI:49883"/>
    </ligand>
</feature>
<feature type="binding site" evidence="1">
    <location>
        <position position="23"/>
    </location>
    <ligand>
        <name>[4Fe-4S] cluster</name>
        <dbReference type="ChEBI" id="CHEBI:49883"/>
    </ligand>
</feature>
<feature type="binding site" evidence="1">
    <location>
        <position position="243"/>
    </location>
    <ligand>
        <name>hybrid [4Fe-2O-2S] cluster</name>
        <dbReference type="ChEBI" id="CHEBI:60519"/>
    </ligand>
</feature>
<feature type="binding site" evidence="1">
    <location>
        <position position="267"/>
    </location>
    <ligand>
        <name>hybrid [4Fe-2O-2S] cluster</name>
        <dbReference type="ChEBI" id="CHEBI:60519"/>
    </ligand>
</feature>
<feature type="binding site" evidence="1">
    <location>
        <position position="311"/>
    </location>
    <ligand>
        <name>hybrid [4Fe-2O-2S] cluster</name>
        <dbReference type="ChEBI" id="CHEBI:60519"/>
    </ligand>
</feature>
<feature type="binding site" description="via persulfide group" evidence="1">
    <location>
        <position position="403"/>
    </location>
    <ligand>
        <name>hybrid [4Fe-2O-2S] cluster</name>
        <dbReference type="ChEBI" id="CHEBI:60519"/>
    </ligand>
</feature>
<feature type="binding site" evidence="1">
    <location>
        <position position="431"/>
    </location>
    <ligand>
        <name>hybrid [4Fe-2O-2S] cluster</name>
        <dbReference type="ChEBI" id="CHEBI:60519"/>
    </ligand>
</feature>
<feature type="binding site" evidence="1">
    <location>
        <position position="456"/>
    </location>
    <ligand>
        <name>hybrid [4Fe-2O-2S] cluster</name>
        <dbReference type="ChEBI" id="CHEBI:60519"/>
    </ligand>
</feature>
<feature type="binding site" evidence="1">
    <location>
        <position position="491"/>
    </location>
    <ligand>
        <name>hybrid [4Fe-2O-2S] cluster</name>
        <dbReference type="ChEBI" id="CHEBI:60519"/>
    </ligand>
</feature>
<feature type="binding site" evidence="1">
    <location>
        <position position="493"/>
    </location>
    <ligand>
        <name>hybrid [4Fe-2O-2S] cluster</name>
        <dbReference type="ChEBI" id="CHEBI:60519"/>
    </ligand>
</feature>
<feature type="modified residue" description="Cysteine persulfide" evidence="1">
    <location>
        <position position="403"/>
    </location>
</feature>
<dbReference type="EC" id="1.7.99.1" evidence="1"/>
<dbReference type="EMBL" id="AP008230">
    <property type="protein sequence ID" value="BAE85165.1"/>
    <property type="molecule type" value="Genomic_DNA"/>
</dbReference>
<dbReference type="RefSeq" id="WP_041272545.1">
    <property type="nucleotide sequence ID" value="NC_007907.1"/>
</dbReference>
<dbReference type="SMR" id="Q24S27"/>
<dbReference type="STRING" id="138119.DSY3376"/>
<dbReference type="KEGG" id="dsy:DSY3376"/>
<dbReference type="eggNOG" id="COG1151">
    <property type="taxonomic scope" value="Bacteria"/>
</dbReference>
<dbReference type="HOGENOM" id="CLU_038344_2_0_9"/>
<dbReference type="Proteomes" id="UP000001946">
    <property type="component" value="Chromosome"/>
</dbReference>
<dbReference type="GO" id="GO:0005737">
    <property type="term" value="C:cytoplasm"/>
    <property type="evidence" value="ECO:0007669"/>
    <property type="project" value="UniProtKB-SubCell"/>
</dbReference>
<dbReference type="GO" id="GO:0051539">
    <property type="term" value="F:4 iron, 4 sulfur cluster binding"/>
    <property type="evidence" value="ECO:0007669"/>
    <property type="project" value="UniProtKB-KW"/>
</dbReference>
<dbReference type="GO" id="GO:0050418">
    <property type="term" value="F:hydroxylamine reductase activity"/>
    <property type="evidence" value="ECO:0007669"/>
    <property type="project" value="UniProtKB-UniRule"/>
</dbReference>
<dbReference type="GO" id="GO:0046872">
    <property type="term" value="F:metal ion binding"/>
    <property type="evidence" value="ECO:0007669"/>
    <property type="project" value="UniProtKB-KW"/>
</dbReference>
<dbReference type="GO" id="GO:0004601">
    <property type="term" value="F:peroxidase activity"/>
    <property type="evidence" value="ECO:0007669"/>
    <property type="project" value="TreeGrafter"/>
</dbReference>
<dbReference type="GO" id="GO:0042542">
    <property type="term" value="P:response to hydrogen peroxide"/>
    <property type="evidence" value="ECO:0007669"/>
    <property type="project" value="TreeGrafter"/>
</dbReference>
<dbReference type="CDD" id="cd01914">
    <property type="entry name" value="HCP"/>
    <property type="match status" value="1"/>
</dbReference>
<dbReference type="FunFam" id="1.20.1270.20:FF:000001">
    <property type="entry name" value="Hydroxylamine reductase"/>
    <property type="match status" value="1"/>
</dbReference>
<dbReference type="FunFam" id="3.40.50.2030:FF:000001">
    <property type="entry name" value="Hydroxylamine reductase"/>
    <property type="match status" value="1"/>
</dbReference>
<dbReference type="FunFam" id="3.40.50.2030:FF:000002">
    <property type="entry name" value="Hydroxylamine reductase"/>
    <property type="match status" value="1"/>
</dbReference>
<dbReference type="Gene3D" id="1.20.1270.20">
    <property type="match status" value="2"/>
</dbReference>
<dbReference type="Gene3D" id="3.40.50.2030">
    <property type="match status" value="2"/>
</dbReference>
<dbReference type="HAMAP" id="MF_00069">
    <property type="entry name" value="Hydroxylam_reduct"/>
    <property type="match status" value="1"/>
</dbReference>
<dbReference type="InterPro" id="IPR004137">
    <property type="entry name" value="HCP/CODH"/>
</dbReference>
<dbReference type="InterPro" id="IPR010048">
    <property type="entry name" value="Hydroxylam_reduct"/>
</dbReference>
<dbReference type="InterPro" id="IPR016099">
    <property type="entry name" value="Prismane-like_a/b-sand"/>
</dbReference>
<dbReference type="InterPro" id="IPR011254">
    <property type="entry name" value="Prismane-like_sf"/>
</dbReference>
<dbReference type="InterPro" id="IPR016100">
    <property type="entry name" value="Prismane_a-bundle"/>
</dbReference>
<dbReference type="NCBIfam" id="TIGR01703">
    <property type="entry name" value="hybrid_clust"/>
    <property type="match status" value="1"/>
</dbReference>
<dbReference type="NCBIfam" id="NF003658">
    <property type="entry name" value="PRK05290.1"/>
    <property type="match status" value="1"/>
</dbReference>
<dbReference type="PANTHER" id="PTHR30109">
    <property type="entry name" value="HYDROXYLAMINE REDUCTASE"/>
    <property type="match status" value="1"/>
</dbReference>
<dbReference type="PANTHER" id="PTHR30109:SF0">
    <property type="entry name" value="HYDROXYLAMINE REDUCTASE"/>
    <property type="match status" value="1"/>
</dbReference>
<dbReference type="Pfam" id="PF03063">
    <property type="entry name" value="Prismane"/>
    <property type="match status" value="1"/>
</dbReference>
<dbReference type="PIRSF" id="PIRSF000076">
    <property type="entry name" value="HCP"/>
    <property type="match status" value="1"/>
</dbReference>
<dbReference type="SUPFAM" id="SSF56821">
    <property type="entry name" value="Prismane protein-like"/>
    <property type="match status" value="1"/>
</dbReference>
<keyword id="KW-0004">4Fe-4S</keyword>
<keyword id="KW-0963">Cytoplasm</keyword>
<keyword id="KW-0408">Iron</keyword>
<keyword id="KW-0411">Iron-sulfur</keyword>
<keyword id="KW-0479">Metal-binding</keyword>
<keyword id="KW-0560">Oxidoreductase</keyword>
<keyword id="KW-1185">Reference proteome</keyword>
<gene>
    <name evidence="1" type="primary">hcp</name>
    <name type="ordered locus">DSY3376</name>
</gene>
<proteinExistence type="inferred from homology"/>
<comment type="function">
    <text evidence="1">Catalyzes the reduction of hydroxylamine to form NH(3) and H(2)O.</text>
</comment>
<comment type="catalytic activity">
    <reaction evidence="1">
        <text>A + NH4(+) + H2O = hydroxylamine + AH2 + H(+)</text>
        <dbReference type="Rhea" id="RHEA:22052"/>
        <dbReference type="ChEBI" id="CHEBI:13193"/>
        <dbReference type="ChEBI" id="CHEBI:15377"/>
        <dbReference type="ChEBI" id="CHEBI:15378"/>
        <dbReference type="ChEBI" id="CHEBI:15429"/>
        <dbReference type="ChEBI" id="CHEBI:17499"/>
        <dbReference type="ChEBI" id="CHEBI:28938"/>
        <dbReference type="EC" id="1.7.99.1"/>
    </reaction>
</comment>
<comment type="cofactor">
    <cofactor evidence="1">
        <name>[4Fe-4S] cluster</name>
        <dbReference type="ChEBI" id="CHEBI:49883"/>
    </cofactor>
    <text evidence="1">Binds 1 [4Fe-4S] cluster.</text>
</comment>
<comment type="cofactor">
    <cofactor evidence="1">
        <name>hybrid [4Fe-2O-2S] cluster</name>
        <dbReference type="ChEBI" id="CHEBI:60519"/>
    </cofactor>
    <text evidence="1">Binds 1 hybrid [4Fe-2O-2S] cluster.</text>
</comment>
<comment type="subcellular location">
    <subcellularLocation>
        <location evidence="1">Cytoplasm</location>
    </subcellularLocation>
</comment>
<comment type="similarity">
    <text evidence="1">Belongs to the HCP family.</text>
</comment>
<sequence>MSMFCFQCQETAKGTGCTIKGVCGKTADVANLQDLLLYVMKGIAINSLQARELGIVRQDVDKFVMEGLFATITNANFDNARFVALVREGLALRDSLKADIVKAGGVLPANLHDSAIWTADSAEEFEQKAAQVGILATENEDVRSLRELLIYGLKGMAAYAEHAFALGYEDNSIFAFMMKGLAATTDDSLSADQLVALVLEAGKYGVDVMALLDKANTTSYGNPEITKVNIGVRNNPAILISGHDLRDLEDLLKQTEGTGVDVYTHGEMLPAHYYPAFKKYAHFVGNYGNAWWKQDKEFDSFNGAILLTTNCLVPPKDSYKDRLFTTSVVGYEGVKHIPAREAGKVKDFSAVIELAKTLPAPTEIETGEIVGGFAHNQVFAVADKVVEAVKSGAVKRFFVMAGCDGRMKSRDYYTEFAKALPQDTIILTAGCAKYKYNKLALGDIGGIPRVLDAGQCNDSYSLAVIALKLKEVFGLDDVNQLPISYNIAWYEQKAVIVLLALLYLGVKNIHLGPTLPGFLSPNVAKVLVENFGIAGITTVEDDVNLFMGA</sequence>
<organism>
    <name type="scientific">Desulfitobacterium hafniense (strain Y51)</name>
    <dbReference type="NCBI Taxonomy" id="138119"/>
    <lineage>
        <taxon>Bacteria</taxon>
        <taxon>Bacillati</taxon>
        <taxon>Bacillota</taxon>
        <taxon>Clostridia</taxon>
        <taxon>Eubacteriales</taxon>
        <taxon>Desulfitobacteriaceae</taxon>
        <taxon>Desulfitobacterium</taxon>
    </lineage>
</organism>